<sequence>MKQNRKNLPIILASSSPARIELLNRIKIIPSQIIPADIDETPNLRELPAPLAIRLAYEKAIKIASQIEESAIIIAANTVAAVGRRILPKATTYEEVKNCIKMLSGRRHRIYTGLCIIKKENDQLTVRQKIVQTIVKFKKLSDEEINFYCSLDEGIDKAGGCKISGYAEAFISFISGSYSNVMGLPLFETVNALTSLGFRCSSIMPAKMNYCHSAT</sequence>
<gene>
    <name type="ordered locus">RC1266</name>
</gene>
<dbReference type="EC" id="3.6.1.9" evidence="1"/>
<dbReference type="EMBL" id="AE006914">
    <property type="protein sequence ID" value="AAL03804.1"/>
    <property type="molecule type" value="Genomic_DNA"/>
</dbReference>
<dbReference type="PIR" id="B97858">
    <property type="entry name" value="B97858"/>
</dbReference>
<dbReference type="RefSeq" id="WP_010977829.1">
    <property type="nucleotide sequence ID" value="NC_003103.1"/>
</dbReference>
<dbReference type="SMR" id="Q92G57"/>
<dbReference type="GeneID" id="928418"/>
<dbReference type="KEGG" id="rco:RC1266"/>
<dbReference type="PATRIC" id="fig|272944.4.peg.1453"/>
<dbReference type="HOGENOM" id="CLU_040416_2_0_5"/>
<dbReference type="Proteomes" id="UP000000816">
    <property type="component" value="Chromosome"/>
</dbReference>
<dbReference type="GO" id="GO:0005737">
    <property type="term" value="C:cytoplasm"/>
    <property type="evidence" value="ECO:0007669"/>
    <property type="project" value="UniProtKB-SubCell"/>
</dbReference>
<dbReference type="GO" id="GO:0047429">
    <property type="term" value="F:nucleoside triphosphate diphosphatase activity"/>
    <property type="evidence" value="ECO:0007669"/>
    <property type="project" value="UniProtKB-EC"/>
</dbReference>
<dbReference type="GO" id="GO:0009117">
    <property type="term" value="P:nucleotide metabolic process"/>
    <property type="evidence" value="ECO:0007669"/>
    <property type="project" value="UniProtKB-KW"/>
</dbReference>
<dbReference type="CDD" id="cd00555">
    <property type="entry name" value="Maf"/>
    <property type="match status" value="1"/>
</dbReference>
<dbReference type="Gene3D" id="3.90.950.10">
    <property type="match status" value="1"/>
</dbReference>
<dbReference type="HAMAP" id="MF_00528">
    <property type="entry name" value="Maf"/>
    <property type="match status" value="1"/>
</dbReference>
<dbReference type="InterPro" id="IPR029001">
    <property type="entry name" value="ITPase-like_fam"/>
</dbReference>
<dbReference type="InterPro" id="IPR003697">
    <property type="entry name" value="Maf-like"/>
</dbReference>
<dbReference type="NCBIfam" id="TIGR00172">
    <property type="entry name" value="maf"/>
    <property type="match status" value="1"/>
</dbReference>
<dbReference type="PANTHER" id="PTHR43213">
    <property type="entry name" value="BIFUNCTIONAL DTTP/UTP PYROPHOSPHATASE/METHYLTRANSFERASE PROTEIN-RELATED"/>
    <property type="match status" value="1"/>
</dbReference>
<dbReference type="PANTHER" id="PTHR43213:SF5">
    <property type="entry name" value="BIFUNCTIONAL DTTP_UTP PYROPHOSPHATASE_METHYLTRANSFERASE PROTEIN-RELATED"/>
    <property type="match status" value="1"/>
</dbReference>
<dbReference type="Pfam" id="PF02545">
    <property type="entry name" value="Maf"/>
    <property type="match status" value="1"/>
</dbReference>
<dbReference type="PIRSF" id="PIRSF006305">
    <property type="entry name" value="Maf"/>
    <property type="match status" value="1"/>
</dbReference>
<dbReference type="SUPFAM" id="SSF52972">
    <property type="entry name" value="ITPase-like"/>
    <property type="match status" value="1"/>
</dbReference>
<reference key="1">
    <citation type="journal article" date="2001" name="Science">
        <title>Mechanisms of evolution in Rickettsia conorii and R. prowazekii.</title>
        <authorList>
            <person name="Ogata H."/>
            <person name="Audic S."/>
            <person name="Renesto-Audiffren P."/>
            <person name="Fournier P.-E."/>
            <person name="Barbe V."/>
            <person name="Samson D."/>
            <person name="Roux V."/>
            <person name="Cossart P."/>
            <person name="Weissenbach J."/>
            <person name="Claverie J.-M."/>
            <person name="Raoult D."/>
        </authorList>
    </citation>
    <scope>NUCLEOTIDE SEQUENCE [LARGE SCALE GENOMIC DNA]</scope>
    <source>
        <strain>ATCC VR-613 / Malish 7</strain>
    </source>
</reference>
<evidence type="ECO:0000255" key="1">
    <source>
        <dbReference type="HAMAP-Rule" id="MF_00528"/>
    </source>
</evidence>
<feature type="chain" id="PRO_0000123057" description="Nucleoside triphosphate pyrophosphatase">
    <location>
        <begin position="1"/>
        <end position="215"/>
    </location>
</feature>
<accession>Q92G57</accession>
<keyword id="KW-0963">Cytoplasm</keyword>
<keyword id="KW-0378">Hydrolase</keyword>
<keyword id="KW-0546">Nucleotide metabolism</keyword>
<protein>
    <recommendedName>
        <fullName evidence="1">Nucleoside triphosphate pyrophosphatase</fullName>
        <ecNumber evidence="1">3.6.1.9</ecNumber>
    </recommendedName>
    <alternativeName>
        <fullName evidence="1">Nucleotide pyrophosphatase</fullName>
        <shortName evidence="1">Nucleotide PPase</shortName>
    </alternativeName>
</protein>
<comment type="function">
    <text evidence="1">Nucleoside triphosphate pyrophosphatase. May have a dual role in cell division arrest and in preventing the incorporation of modified nucleotides into cellular nucleic acids.</text>
</comment>
<comment type="catalytic activity">
    <reaction evidence="1">
        <text>a ribonucleoside 5'-triphosphate + H2O = a ribonucleoside 5'-phosphate + diphosphate + H(+)</text>
        <dbReference type="Rhea" id="RHEA:23996"/>
        <dbReference type="ChEBI" id="CHEBI:15377"/>
        <dbReference type="ChEBI" id="CHEBI:15378"/>
        <dbReference type="ChEBI" id="CHEBI:33019"/>
        <dbReference type="ChEBI" id="CHEBI:58043"/>
        <dbReference type="ChEBI" id="CHEBI:61557"/>
        <dbReference type="EC" id="3.6.1.9"/>
    </reaction>
</comment>
<comment type="catalytic activity">
    <reaction evidence="1">
        <text>a 2'-deoxyribonucleoside 5'-triphosphate + H2O = a 2'-deoxyribonucleoside 5'-phosphate + diphosphate + H(+)</text>
        <dbReference type="Rhea" id="RHEA:44644"/>
        <dbReference type="ChEBI" id="CHEBI:15377"/>
        <dbReference type="ChEBI" id="CHEBI:15378"/>
        <dbReference type="ChEBI" id="CHEBI:33019"/>
        <dbReference type="ChEBI" id="CHEBI:61560"/>
        <dbReference type="ChEBI" id="CHEBI:65317"/>
        <dbReference type="EC" id="3.6.1.9"/>
    </reaction>
</comment>
<comment type="cofactor">
    <cofactor evidence="1">
        <name>a divalent metal cation</name>
        <dbReference type="ChEBI" id="CHEBI:60240"/>
    </cofactor>
</comment>
<comment type="subcellular location">
    <subcellularLocation>
        <location evidence="1">Cytoplasm</location>
    </subcellularLocation>
</comment>
<comment type="similarity">
    <text evidence="1">Belongs to the Maf family.</text>
</comment>
<name>NTPP_RICCN</name>
<proteinExistence type="inferred from homology"/>
<organism>
    <name type="scientific">Rickettsia conorii (strain ATCC VR-613 / Malish 7)</name>
    <dbReference type="NCBI Taxonomy" id="272944"/>
    <lineage>
        <taxon>Bacteria</taxon>
        <taxon>Pseudomonadati</taxon>
        <taxon>Pseudomonadota</taxon>
        <taxon>Alphaproteobacteria</taxon>
        <taxon>Rickettsiales</taxon>
        <taxon>Rickettsiaceae</taxon>
        <taxon>Rickettsieae</taxon>
        <taxon>Rickettsia</taxon>
        <taxon>spotted fever group</taxon>
    </lineage>
</organism>